<keyword id="KW-0044">Antibiotic</keyword>
<keyword id="KW-0929">Antimicrobial</keyword>
<keyword id="KW-0081">Bacteriolytic enzyme</keyword>
<keyword id="KW-0968">Cytoplasmic vesicle</keyword>
<keyword id="KW-1015">Disulfide bond</keyword>
<keyword id="KW-0326">Glycosidase</keyword>
<keyword id="KW-0378">Hydrolase</keyword>
<keyword id="KW-1185">Reference proteome</keyword>
<keyword id="KW-0732">Signal</keyword>
<accession>Q556Y7</accession>
<accession>Q86JT4</accession>
<feature type="signal peptide" evidence="1">
    <location>
        <begin position="1"/>
        <end position="19"/>
    </location>
</feature>
<feature type="chain" id="PRO_0000315920" description="Lysozyme D" evidence="1">
    <location>
        <begin position="20"/>
        <end position="260"/>
    </location>
</feature>
<feature type="region of interest" description="Disordered" evidence="2">
    <location>
        <begin position="83"/>
        <end position="148"/>
    </location>
</feature>
<feature type="compositionally biased region" description="Gly residues" evidence="2">
    <location>
        <begin position="101"/>
        <end position="119"/>
    </location>
</feature>
<feature type="compositionally biased region" description="Gly residues" evidence="2">
    <location>
        <begin position="129"/>
        <end position="147"/>
    </location>
</feature>
<reference key="1">
    <citation type="journal article" date="2002" name="Nature">
        <title>Sequence and analysis of chromosome 2 of Dictyostelium discoideum.</title>
        <authorList>
            <person name="Gloeckner G."/>
            <person name="Eichinger L."/>
            <person name="Szafranski K."/>
            <person name="Pachebat J.A."/>
            <person name="Bankier A.T."/>
            <person name="Dear P.H."/>
            <person name="Lehmann R."/>
            <person name="Baumgart C."/>
            <person name="Parra G."/>
            <person name="Abril J.F."/>
            <person name="Guigo R."/>
            <person name="Kumpf K."/>
            <person name="Tunggal B."/>
            <person name="Cox E.C."/>
            <person name="Quail M.A."/>
            <person name="Platzer M."/>
            <person name="Rosenthal A."/>
            <person name="Noegel A.A."/>
        </authorList>
    </citation>
    <scope>NUCLEOTIDE SEQUENCE [LARGE SCALE GENOMIC DNA]</scope>
    <source>
        <strain>AX4</strain>
    </source>
</reference>
<reference evidence="4" key="2">
    <citation type="journal article" date="2005" name="Nature">
        <title>The genome of the social amoeba Dictyostelium discoideum.</title>
        <authorList>
            <person name="Eichinger L."/>
            <person name="Pachebat J.A."/>
            <person name="Gloeckner G."/>
            <person name="Rajandream M.A."/>
            <person name="Sucgang R."/>
            <person name="Berriman M."/>
            <person name="Song J."/>
            <person name="Olsen R."/>
            <person name="Szafranski K."/>
            <person name="Xu Q."/>
            <person name="Tunggal B."/>
            <person name="Kummerfeld S."/>
            <person name="Madera M."/>
            <person name="Konfortov B.A."/>
            <person name="Rivero F."/>
            <person name="Bankier A.T."/>
            <person name="Lehmann R."/>
            <person name="Hamlin N."/>
            <person name="Davies R."/>
            <person name="Gaudet P."/>
            <person name="Fey P."/>
            <person name="Pilcher K."/>
            <person name="Chen G."/>
            <person name="Saunders D."/>
            <person name="Sodergren E.J."/>
            <person name="Davis P."/>
            <person name="Kerhornou A."/>
            <person name="Nie X."/>
            <person name="Hall N."/>
            <person name="Anjard C."/>
            <person name="Hemphill L."/>
            <person name="Bason N."/>
            <person name="Farbrother P."/>
            <person name="Desany B."/>
            <person name="Just E."/>
            <person name="Morio T."/>
            <person name="Rost R."/>
            <person name="Churcher C.M."/>
            <person name="Cooper J."/>
            <person name="Haydock S."/>
            <person name="van Driessche N."/>
            <person name="Cronin A."/>
            <person name="Goodhead I."/>
            <person name="Muzny D.M."/>
            <person name="Mourier T."/>
            <person name="Pain A."/>
            <person name="Lu M."/>
            <person name="Harper D."/>
            <person name="Lindsay R."/>
            <person name="Hauser H."/>
            <person name="James K.D."/>
            <person name="Quiles M."/>
            <person name="Madan Babu M."/>
            <person name="Saito T."/>
            <person name="Buchrieser C."/>
            <person name="Wardroper A."/>
            <person name="Felder M."/>
            <person name="Thangavelu M."/>
            <person name="Johnson D."/>
            <person name="Knights A."/>
            <person name="Loulseged H."/>
            <person name="Mungall K.L."/>
            <person name="Oliver K."/>
            <person name="Price C."/>
            <person name="Quail M.A."/>
            <person name="Urushihara H."/>
            <person name="Hernandez J."/>
            <person name="Rabbinowitsch E."/>
            <person name="Steffen D."/>
            <person name="Sanders M."/>
            <person name="Ma J."/>
            <person name="Kohara Y."/>
            <person name="Sharp S."/>
            <person name="Simmonds M.N."/>
            <person name="Spiegler S."/>
            <person name="Tivey A."/>
            <person name="Sugano S."/>
            <person name="White B."/>
            <person name="Walker D."/>
            <person name="Woodward J.R."/>
            <person name="Winckler T."/>
            <person name="Tanaka Y."/>
            <person name="Shaulsky G."/>
            <person name="Schleicher M."/>
            <person name="Weinstock G.M."/>
            <person name="Rosenthal A."/>
            <person name="Cox E.C."/>
            <person name="Chisholm R.L."/>
            <person name="Gibbs R.A."/>
            <person name="Loomis W.F."/>
            <person name="Platzer M."/>
            <person name="Kay R.R."/>
            <person name="Williams J.G."/>
            <person name="Dear P.H."/>
            <person name="Noegel A.A."/>
            <person name="Barrell B.G."/>
            <person name="Kuspa A."/>
        </authorList>
    </citation>
    <scope>NUCLEOTIDE SEQUENCE [LARGE SCALE GENOMIC DNA]</scope>
    <source>
        <strain>AX4</strain>
    </source>
</reference>
<evidence type="ECO:0000250" key="1">
    <source>
        <dbReference type="UniProtKB" id="Q554H2"/>
    </source>
</evidence>
<evidence type="ECO:0000256" key="2">
    <source>
        <dbReference type="SAM" id="MobiDB-lite"/>
    </source>
</evidence>
<evidence type="ECO:0000305" key="3"/>
<evidence type="ECO:0000312" key="4">
    <source>
        <dbReference type="EMBL" id="EAL70556.1"/>
    </source>
</evidence>
<organism>
    <name type="scientific">Dictyostelium discoideum</name>
    <name type="common">Social amoeba</name>
    <dbReference type="NCBI Taxonomy" id="44689"/>
    <lineage>
        <taxon>Eukaryota</taxon>
        <taxon>Amoebozoa</taxon>
        <taxon>Evosea</taxon>
        <taxon>Eumycetozoa</taxon>
        <taxon>Dictyostelia</taxon>
        <taxon>Dictyosteliales</taxon>
        <taxon>Dictyosteliaceae</taxon>
        <taxon>Dictyostelium</taxon>
    </lineage>
</organism>
<name>LYSD_DICDI</name>
<comment type="function">
    <text evidence="1">Has antibacterial activity.</text>
</comment>
<comment type="catalytic activity">
    <reaction>
        <text>Hydrolysis of (1-&gt;4)-beta-linkages between N-acetylmuramic acid and N-acetyl-D-glucosamine residues in a peptidoglycan and between N-acetyl-D-glucosamine residues in chitodextrins.</text>
        <dbReference type="EC" id="3.2.1.17"/>
    </reaction>
</comment>
<comment type="subcellular location">
    <subcellularLocation>
        <location evidence="1">Cytoplasmic vesicle lumen</location>
    </subcellularLocation>
</comment>
<comment type="PTM">
    <text evidence="1">Contains disulfide bonds.</text>
</comment>
<comment type="similarity">
    <text evidence="3">Belongs to the dictyostelium lysozyme family.</text>
</comment>
<comment type="caution">
    <text evidence="3">The gene for this protein is duplicated in strains AX3 and AX4. These strains contain a duplication of a segment of 750 kb of chromosome 2 compared to the corresponding sequence in strain AX2.</text>
</comment>
<sequence>MRLLVTLILLIFVLTVSGQYSCSNPCYGNMCCSIPSNNEYYLTTFCDESTACGTPCSAQTYFTADSQRFGCGVTLTICSTSGGSTTTGGTGSAGTSTSSGSGSGSGSGSGSGSGSGSGTSGSSSSGSSSGSGSGSSSGSGGSSGSGSGSTMETGGFYGVCVKAITIDAGPNISVEEEAGMAIIDASSQICQDLFGSSSCGWSDKRSITAVQSSVEDGFPVNKPFNVTFEDYNKIISNSLILDQQCSNKNNCKYNKLELMK</sequence>
<protein>
    <recommendedName>
        <fullName>Lysozyme D</fullName>
        <ecNumber>3.2.1.17</ecNumber>
    </recommendedName>
    <alternativeName>
        <fullName>1,4-beta-N-acetylmuramidase D</fullName>
    </alternativeName>
</protein>
<gene>
    <name type="primary">alyD-1</name>
    <name type="ORF">DDB_G0273197</name>
</gene>
<gene>
    <name type="primary">alyD-2</name>
    <name type="ORF">DDB_G0273731</name>
</gene>
<dbReference type="EC" id="3.2.1.17"/>
<dbReference type="EMBL" id="AAFI02000011">
    <property type="protein sequence ID" value="EAL70556.1"/>
    <property type="molecule type" value="Genomic_DNA"/>
</dbReference>
<dbReference type="EMBL" id="AAFI02000009">
    <property type="protein sequence ID" value="EAL70816.1"/>
    <property type="molecule type" value="Genomic_DNA"/>
</dbReference>
<dbReference type="RefSeq" id="XP_644482.1">
    <property type="nucleotide sequence ID" value="XM_639390.1"/>
</dbReference>
<dbReference type="RefSeq" id="XP_644768.1">
    <property type="nucleotide sequence ID" value="XM_639676.1"/>
</dbReference>
<dbReference type="FunCoup" id="Q556Y7">
    <property type="interactions" value="436"/>
</dbReference>
<dbReference type="PaxDb" id="44689-DDB0231280"/>
<dbReference type="EnsemblProtists" id="EAL70556">
    <property type="protein sequence ID" value="EAL70556"/>
    <property type="gene ID" value="DDB_G0273731"/>
</dbReference>
<dbReference type="EnsemblProtists" id="EAL70816">
    <property type="protein sequence ID" value="EAL70816"/>
    <property type="gene ID" value="DDB_G0273197"/>
</dbReference>
<dbReference type="GeneID" id="8618870"/>
<dbReference type="GeneID" id="8619106"/>
<dbReference type="KEGG" id="ddi:DDB_G0273197"/>
<dbReference type="KEGG" id="ddi:DDB_G0273731"/>
<dbReference type="dictyBase" id="DDB_G0273197">
    <property type="gene designation" value="alyD-1"/>
</dbReference>
<dbReference type="dictyBase" id="DDB_G0273731">
    <property type="gene designation" value="alyD-2"/>
</dbReference>
<dbReference type="VEuPathDB" id="AmoebaDB:DDB_G0273731"/>
<dbReference type="eggNOG" id="ENOG502RD7J">
    <property type="taxonomic scope" value="Eukaryota"/>
</dbReference>
<dbReference type="HOGENOM" id="CLU_1071285_0_0_1"/>
<dbReference type="InParanoid" id="Q556Y7"/>
<dbReference type="OMA" id="TFCDEST"/>
<dbReference type="PhylomeDB" id="Q556Y7"/>
<dbReference type="PRO" id="PR:Q556Y7"/>
<dbReference type="Proteomes" id="UP000002195">
    <property type="component" value="Chromosome 2"/>
</dbReference>
<dbReference type="GO" id="GO:0031410">
    <property type="term" value="C:cytoplasmic vesicle"/>
    <property type="evidence" value="ECO:0000250"/>
    <property type="project" value="UniProtKB"/>
</dbReference>
<dbReference type="GO" id="GO:0060205">
    <property type="term" value="C:cytoplasmic vesicle lumen"/>
    <property type="evidence" value="ECO:0007669"/>
    <property type="project" value="UniProtKB-SubCell"/>
</dbReference>
<dbReference type="GO" id="GO:0031983">
    <property type="term" value="C:vesicle lumen"/>
    <property type="evidence" value="ECO:0000250"/>
    <property type="project" value="UniProtKB"/>
</dbReference>
<dbReference type="GO" id="GO:0003796">
    <property type="term" value="F:lysozyme activity"/>
    <property type="evidence" value="ECO:0000250"/>
    <property type="project" value="UniProtKB"/>
</dbReference>
<dbReference type="GO" id="GO:0050830">
    <property type="term" value="P:defense response to Gram-positive bacterium"/>
    <property type="evidence" value="ECO:0000250"/>
    <property type="project" value="UniProtKB"/>
</dbReference>
<dbReference type="GO" id="GO:0031640">
    <property type="term" value="P:killing of cells of another organism"/>
    <property type="evidence" value="ECO:0007669"/>
    <property type="project" value="UniProtKB-KW"/>
</dbReference>
<dbReference type="GO" id="GO:0009253">
    <property type="term" value="P:peptidoglycan catabolic process"/>
    <property type="evidence" value="ECO:0000305"/>
    <property type="project" value="dictyBase"/>
</dbReference>
<dbReference type="InterPro" id="IPR052258">
    <property type="entry name" value="Diverse_Func_Domain-Protein"/>
</dbReference>
<dbReference type="PANTHER" id="PTHR37612">
    <property type="entry name" value="FIBROIN HEAVY CHAIN FIB-H LIKE PROTEIN"/>
    <property type="match status" value="1"/>
</dbReference>
<dbReference type="PANTHER" id="PTHR37612:SF17">
    <property type="entry name" value="LYSOZYME D"/>
    <property type="match status" value="1"/>
</dbReference>
<proteinExistence type="inferred from homology"/>